<comment type="function">
    <text evidence="3">May function as a G-protein-coupled receptor.</text>
</comment>
<comment type="subunit">
    <text evidence="1">May interact via its C-terminus with GNAS and GNAI1.</text>
</comment>
<comment type="subcellular location">
    <subcellularLocation>
        <location evidence="11">Membrane</location>
        <topology evidence="11">Multi-pass membrane protein</topology>
    </subcellularLocation>
</comment>
<comment type="PTM">
    <text evidence="6">Autoproteolytically processed at the GPS region of the GAIN-B domain; this cleavage modulates receptor activity.</text>
</comment>
<comment type="similarity">
    <text evidence="11">Belongs to the polycystin family.</text>
</comment>
<organism>
    <name type="scientific">Mus musculus</name>
    <name type="common">Mouse</name>
    <dbReference type="NCBI Taxonomy" id="10090"/>
    <lineage>
        <taxon>Eukaryota</taxon>
        <taxon>Metazoa</taxon>
        <taxon>Chordata</taxon>
        <taxon>Craniata</taxon>
        <taxon>Vertebrata</taxon>
        <taxon>Euteleostomi</taxon>
        <taxon>Mammalia</taxon>
        <taxon>Eutheria</taxon>
        <taxon>Euarchontoglires</taxon>
        <taxon>Glires</taxon>
        <taxon>Rodentia</taxon>
        <taxon>Myomorpha</taxon>
        <taxon>Muroidea</taxon>
        <taxon>Muridae</taxon>
        <taxon>Murinae</taxon>
        <taxon>Mus</taxon>
        <taxon>Mus</taxon>
    </lineage>
</organism>
<dbReference type="EMBL" id="AY164484">
    <property type="protein sequence ID" value="AAO32797.1"/>
    <property type="molecule type" value="mRNA"/>
</dbReference>
<dbReference type="RefSeq" id="NP_083962.4">
    <property type="nucleotide sequence ID" value="NM_029686.4"/>
</dbReference>
<dbReference type="SMR" id="Q7TN88"/>
<dbReference type="FunCoup" id="Q7TN88">
    <property type="interactions" value="461"/>
</dbReference>
<dbReference type="STRING" id="10090.ENSMUSP00000095977"/>
<dbReference type="GlyCosmos" id="Q7TN88">
    <property type="glycosylation" value="11 sites, No reported glycans"/>
</dbReference>
<dbReference type="GlyGen" id="Q7TN88">
    <property type="glycosylation" value="12 sites"/>
</dbReference>
<dbReference type="iPTMnet" id="Q7TN88"/>
<dbReference type="PhosphoSitePlus" id="Q7TN88"/>
<dbReference type="SwissPalm" id="Q7TN88"/>
<dbReference type="PaxDb" id="10090-ENSMUSP00000104721"/>
<dbReference type="DNASU" id="76645"/>
<dbReference type="GeneID" id="76645"/>
<dbReference type="KEGG" id="mmu:76645"/>
<dbReference type="AGR" id="MGI:2664668"/>
<dbReference type="CTD" id="114780"/>
<dbReference type="MGI" id="MGI:2664668">
    <property type="gene designation" value="Pkd1l2"/>
</dbReference>
<dbReference type="eggNOG" id="KOG3599">
    <property type="taxonomic scope" value="Eukaryota"/>
</dbReference>
<dbReference type="InParanoid" id="Q7TN88"/>
<dbReference type="PhylomeDB" id="Q7TN88"/>
<dbReference type="BioGRID-ORCS" id="76645">
    <property type="hits" value="1 hit in 78 CRISPR screens"/>
</dbReference>
<dbReference type="ChiTaRS" id="Pkd1l2">
    <property type="organism name" value="mouse"/>
</dbReference>
<dbReference type="PRO" id="PR:Q7TN88"/>
<dbReference type="Proteomes" id="UP000000589">
    <property type="component" value="Unplaced"/>
</dbReference>
<dbReference type="RNAct" id="Q7TN88">
    <property type="molecule type" value="protein"/>
</dbReference>
<dbReference type="GO" id="GO:0016020">
    <property type="term" value="C:membrane"/>
    <property type="evidence" value="ECO:0007669"/>
    <property type="project" value="UniProtKB-SubCell"/>
</dbReference>
<dbReference type="GO" id="GO:0005509">
    <property type="term" value="F:calcium ion binding"/>
    <property type="evidence" value="ECO:0007669"/>
    <property type="project" value="InterPro"/>
</dbReference>
<dbReference type="GO" id="GO:0030246">
    <property type="term" value="F:carbohydrate binding"/>
    <property type="evidence" value="ECO:0007669"/>
    <property type="project" value="UniProtKB-KW"/>
</dbReference>
<dbReference type="GO" id="GO:0001965">
    <property type="term" value="F:G-protein alpha-subunit binding"/>
    <property type="evidence" value="ECO:0000266"/>
    <property type="project" value="MGI"/>
</dbReference>
<dbReference type="CDD" id="cd00037">
    <property type="entry name" value="CLECT"/>
    <property type="match status" value="1"/>
</dbReference>
<dbReference type="CDD" id="cd22831">
    <property type="entry name" value="Gal_Rha_Lectin_PKD1L2"/>
    <property type="match status" value="1"/>
</dbReference>
<dbReference type="CDD" id="cd00146">
    <property type="entry name" value="PKD"/>
    <property type="match status" value="1"/>
</dbReference>
<dbReference type="CDD" id="cd01752">
    <property type="entry name" value="PLAT_polycystin"/>
    <property type="match status" value="1"/>
</dbReference>
<dbReference type="FunFam" id="2.60.60.20:FF:000008">
    <property type="entry name" value="Polycystic kidney disease 1-like 2, isoform CRA_a"/>
    <property type="match status" value="1"/>
</dbReference>
<dbReference type="FunFam" id="1.10.287.70:FF:000086">
    <property type="entry name" value="Polycystic kidney disease 2"/>
    <property type="match status" value="1"/>
</dbReference>
<dbReference type="FunFam" id="2.60.220.50:FF:000029">
    <property type="entry name" value="Polycystic kidney disease protein 1-like 2"/>
    <property type="match status" value="1"/>
</dbReference>
<dbReference type="FunFam" id="3.10.100.10:FF:000073">
    <property type="entry name" value="Polycystic kidney disease protein 1-like 2"/>
    <property type="match status" value="1"/>
</dbReference>
<dbReference type="FunFam" id="2.60.120.740:FF:000005">
    <property type="entry name" value="polycystic kidney disease protein 1-like 2"/>
    <property type="match status" value="1"/>
</dbReference>
<dbReference type="Gene3D" id="1.10.287.70">
    <property type="match status" value="1"/>
</dbReference>
<dbReference type="Gene3D" id="2.60.120.740">
    <property type="match status" value="1"/>
</dbReference>
<dbReference type="Gene3D" id="2.60.220.50">
    <property type="match status" value="1"/>
</dbReference>
<dbReference type="Gene3D" id="3.10.100.10">
    <property type="entry name" value="Mannose-Binding Protein A, subunit A"/>
    <property type="match status" value="1"/>
</dbReference>
<dbReference type="Gene3D" id="2.60.60.20">
    <property type="entry name" value="PLAT/LH2 domain"/>
    <property type="match status" value="1"/>
</dbReference>
<dbReference type="InterPro" id="IPR001304">
    <property type="entry name" value="C-type_lectin-like"/>
</dbReference>
<dbReference type="InterPro" id="IPR016186">
    <property type="entry name" value="C-type_lectin-like/link_sf"/>
</dbReference>
<dbReference type="InterPro" id="IPR016187">
    <property type="entry name" value="CTDL_fold"/>
</dbReference>
<dbReference type="InterPro" id="IPR057244">
    <property type="entry name" value="GAIN_B"/>
</dbReference>
<dbReference type="InterPro" id="IPR046338">
    <property type="entry name" value="GAIN_dom_sf"/>
</dbReference>
<dbReference type="InterPro" id="IPR000203">
    <property type="entry name" value="GPS"/>
</dbReference>
<dbReference type="InterPro" id="IPR000922">
    <property type="entry name" value="Lectin_gal-bd_dom"/>
</dbReference>
<dbReference type="InterPro" id="IPR043159">
    <property type="entry name" value="Lectin_gal-bd_sf"/>
</dbReference>
<dbReference type="InterPro" id="IPR002859">
    <property type="entry name" value="PKD/REJ-like"/>
</dbReference>
<dbReference type="InterPro" id="IPR013122">
    <property type="entry name" value="PKD1_2_channel"/>
</dbReference>
<dbReference type="InterPro" id="IPR003915">
    <property type="entry name" value="PKD_2"/>
</dbReference>
<dbReference type="InterPro" id="IPR035986">
    <property type="entry name" value="PKD_dom_sf"/>
</dbReference>
<dbReference type="InterPro" id="IPR001024">
    <property type="entry name" value="PLAT/LH2_dom"/>
</dbReference>
<dbReference type="InterPro" id="IPR036392">
    <property type="entry name" value="PLAT/LH2_dom_sf"/>
</dbReference>
<dbReference type="InterPro" id="IPR042060">
    <property type="entry name" value="PLAT_polycystin1"/>
</dbReference>
<dbReference type="InterPro" id="IPR051223">
    <property type="entry name" value="Polycystin"/>
</dbReference>
<dbReference type="InterPro" id="IPR046791">
    <property type="entry name" value="Polycystin_dom"/>
</dbReference>
<dbReference type="InterPro" id="IPR014010">
    <property type="entry name" value="REJ_dom"/>
</dbReference>
<dbReference type="PANTHER" id="PTHR10877">
    <property type="entry name" value="POLYCYSTIN FAMILY MEMBER"/>
    <property type="match status" value="1"/>
</dbReference>
<dbReference type="PANTHER" id="PTHR10877:SF134">
    <property type="entry name" value="POLYCYSTIN-1-LIKE PROTEIN 2"/>
    <property type="match status" value="1"/>
</dbReference>
<dbReference type="Pfam" id="PF01825">
    <property type="entry name" value="GPS"/>
    <property type="match status" value="1"/>
</dbReference>
<dbReference type="Pfam" id="PF00059">
    <property type="entry name" value="Lectin_C"/>
    <property type="match status" value="1"/>
</dbReference>
<dbReference type="Pfam" id="PF08016">
    <property type="entry name" value="PKD_channel"/>
    <property type="match status" value="1"/>
</dbReference>
<dbReference type="Pfam" id="PF01477">
    <property type="entry name" value="PLAT"/>
    <property type="match status" value="1"/>
</dbReference>
<dbReference type="Pfam" id="PF20519">
    <property type="entry name" value="Polycystin_dom"/>
    <property type="match status" value="1"/>
</dbReference>
<dbReference type="Pfam" id="PF02010">
    <property type="entry name" value="REJ"/>
    <property type="match status" value="1"/>
</dbReference>
<dbReference type="Pfam" id="PF02140">
    <property type="entry name" value="SUEL_Lectin"/>
    <property type="match status" value="1"/>
</dbReference>
<dbReference type="PRINTS" id="PR01433">
    <property type="entry name" value="POLYCYSTIN2"/>
</dbReference>
<dbReference type="SMART" id="SM00034">
    <property type="entry name" value="CLECT"/>
    <property type="match status" value="1"/>
</dbReference>
<dbReference type="SMART" id="SM00303">
    <property type="entry name" value="GPS"/>
    <property type="match status" value="1"/>
</dbReference>
<dbReference type="SMART" id="SM00308">
    <property type="entry name" value="LH2"/>
    <property type="match status" value="1"/>
</dbReference>
<dbReference type="SUPFAM" id="SSF56436">
    <property type="entry name" value="C-type lectin-like"/>
    <property type="match status" value="1"/>
</dbReference>
<dbReference type="SUPFAM" id="SSF49723">
    <property type="entry name" value="Lipase/lipooxygenase domain (PLAT/LH2 domain)"/>
    <property type="match status" value="1"/>
</dbReference>
<dbReference type="SUPFAM" id="SSF49299">
    <property type="entry name" value="PKD domain"/>
    <property type="match status" value="1"/>
</dbReference>
<dbReference type="PROSITE" id="PS50041">
    <property type="entry name" value="C_TYPE_LECTIN_2"/>
    <property type="match status" value="1"/>
</dbReference>
<dbReference type="PROSITE" id="PS50221">
    <property type="entry name" value="GAIN_B"/>
    <property type="match status" value="1"/>
</dbReference>
<dbReference type="PROSITE" id="PS50095">
    <property type="entry name" value="PLAT"/>
    <property type="match status" value="1"/>
</dbReference>
<dbReference type="PROSITE" id="PS51111">
    <property type="entry name" value="REJ"/>
    <property type="match status" value="1"/>
</dbReference>
<dbReference type="PROSITE" id="PS50228">
    <property type="entry name" value="SUEL_LECTIN"/>
    <property type="match status" value="1"/>
</dbReference>
<feature type="signal peptide" evidence="4">
    <location>
        <begin position="1"/>
        <end position="18"/>
    </location>
</feature>
<feature type="chain" id="PRO_0000322577" description="Polycystin-1-like protein 2">
    <location>
        <begin position="19"/>
        <end position="2461"/>
    </location>
</feature>
<feature type="transmembrane region" description="Helical" evidence="4">
    <location>
        <begin position="1346"/>
        <end position="1366"/>
    </location>
</feature>
<feature type="transmembrane region" description="Helical" evidence="4">
    <location>
        <begin position="1554"/>
        <end position="1574"/>
    </location>
</feature>
<feature type="transmembrane region" description="Helical" evidence="4">
    <location>
        <begin position="1596"/>
        <end position="1616"/>
    </location>
</feature>
<feature type="transmembrane region" description="Helical" evidence="4">
    <location>
        <begin position="1816"/>
        <end position="1836"/>
    </location>
</feature>
<feature type="transmembrane region" description="Helical" evidence="4">
    <location>
        <begin position="1863"/>
        <end position="1883"/>
    </location>
</feature>
<feature type="transmembrane region" description="Helical" evidence="4">
    <location>
        <begin position="1940"/>
        <end position="1960"/>
    </location>
</feature>
<feature type="transmembrane region" description="Helical" evidence="4">
    <location>
        <begin position="2186"/>
        <end position="2206"/>
    </location>
</feature>
<feature type="transmembrane region" description="Helical" evidence="4">
    <location>
        <begin position="2222"/>
        <end position="2242"/>
    </location>
</feature>
<feature type="transmembrane region" description="Helical" evidence="4">
    <location>
        <begin position="2273"/>
        <end position="2293"/>
    </location>
</feature>
<feature type="transmembrane region" description="Helical" evidence="4">
    <location>
        <begin position="2315"/>
        <end position="2335"/>
    </location>
</feature>
<feature type="transmembrane region" description="Helical" evidence="4">
    <location>
        <begin position="2380"/>
        <end position="2400"/>
    </location>
</feature>
<feature type="domain" description="C-type lectin" evidence="5">
    <location>
        <begin position="33"/>
        <end position="152"/>
    </location>
</feature>
<feature type="domain" description="SUEL-type lectin" evidence="8">
    <location>
        <begin position="160"/>
        <end position="251"/>
    </location>
</feature>
<feature type="domain" description="PKD">
    <location>
        <begin position="255"/>
        <end position="346"/>
    </location>
</feature>
<feature type="domain" description="REJ" evidence="9">
    <location>
        <begin position="424"/>
        <end position="1125"/>
    </location>
</feature>
<feature type="domain" description="GAIN-B" evidence="6">
    <location>
        <begin position="1174"/>
        <end position="1332"/>
    </location>
</feature>
<feature type="domain" description="PLAT" evidence="7">
    <location>
        <begin position="1391"/>
        <end position="1508"/>
    </location>
</feature>
<feature type="region of interest" description="GPS" evidence="6">
    <location>
        <begin position="1283"/>
        <end position="1332"/>
    </location>
</feature>
<feature type="region of interest" description="Disordered" evidence="10">
    <location>
        <begin position="1623"/>
        <end position="1648"/>
    </location>
</feature>
<feature type="region of interest" description="Disordered" evidence="10">
    <location>
        <begin position="1702"/>
        <end position="1729"/>
    </location>
</feature>
<feature type="region of interest" description="Interaction with GNAS and GNAI1" evidence="1">
    <location>
        <begin position="2381"/>
        <end position="2461"/>
    </location>
</feature>
<feature type="region of interest" description="Disordered" evidence="10">
    <location>
        <begin position="2438"/>
        <end position="2461"/>
    </location>
</feature>
<feature type="compositionally biased region" description="Polar residues" evidence="10">
    <location>
        <begin position="1634"/>
        <end position="1644"/>
    </location>
</feature>
<feature type="compositionally biased region" description="Low complexity" evidence="10">
    <location>
        <begin position="2441"/>
        <end position="2461"/>
    </location>
</feature>
<feature type="site" description="Cleavage; by autolysis" evidence="6">
    <location>
        <begin position="1316"/>
        <end position="1317"/>
    </location>
</feature>
<feature type="glycosylation site" description="N-linked (GlcNAc...) asparagine" evidence="4">
    <location>
        <position position="94"/>
    </location>
</feature>
<feature type="glycosylation site" description="N-linked (GlcNAc...) asparagine" evidence="4">
    <location>
        <position position="110"/>
    </location>
</feature>
<feature type="glycosylation site" description="N-linked (GlcNAc...) asparagine" evidence="4">
    <location>
        <position position="165"/>
    </location>
</feature>
<feature type="glycosylation site" description="N-linked (GlcNAc...) asparagine" evidence="4">
    <location>
        <position position="267"/>
    </location>
</feature>
<feature type="glycosylation site" description="N-linked (GlcNAc...) asparagine" evidence="4">
    <location>
        <position position="306"/>
    </location>
</feature>
<feature type="glycosylation site" description="N-linked (GlcNAc...) asparagine" evidence="4">
    <location>
        <position position="390"/>
    </location>
</feature>
<feature type="glycosylation site" description="N-linked (GlcNAc...) asparagine" evidence="4">
    <location>
        <position position="406"/>
    </location>
</feature>
<feature type="glycosylation site" description="N-linked (GlcNAc...) asparagine" evidence="4">
    <location>
        <position position="443"/>
    </location>
</feature>
<feature type="glycosylation site" description="N-linked (GlcNAc...) asparagine" evidence="4">
    <location>
        <position position="473"/>
    </location>
</feature>
<feature type="glycosylation site" description="N-linked (GlcNAc...) asparagine" evidence="4">
    <location>
        <position position="494"/>
    </location>
</feature>
<feature type="glycosylation site" description="N-linked (GlcNAc...) asparagine" evidence="4">
    <location>
        <position position="1187"/>
    </location>
</feature>
<feature type="disulfide bond" evidence="1">
    <location>
        <begin position="54"/>
        <end position="151"/>
    </location>
</feature>
<feature type="disulfide bond" evidence="1">
    <location>
        <begin position="126"/>
        <end position="143"/>
    </location>
</feature>
<feature type="disulfide bond" evidence="6">
    <location>
        <begin position="1283"/>
        <end position="1311"/>
    </location>
</feature>
<feature type="disulfide bond" evidence="6">
    <location>
        <begin position="1298"/>
        <end position="1313"/>
    </location>
</feature>
<accession>Q7TN88</accession>
<evidence type="ECO:0000250" key="1"/>
<evidence type="ECO:0000250" key="2">
    <source>
        <dbReference type="UniProtKB" id="Q7Z442"/>
    </source>
</evidence>
<evidence type="ECO:0000250" key="3">
    <source>
        <dbReference type="UniProtKB" id="Q7Z443"/>
    </source>
</evidence>
<evidence type="ECO:0000255" key="4"/>
<evidence type="ECO:0000255" key="5">
    <source>
        <dbReference type="PROSITE-ProRule" id="PRU00040"/>
    </source>
</evidence>
<evidence type="ECO:0000255" key="6">
    <source>
        <dbReference type="PROSITE-ProRule" id="PRU00098"/>
    </source>
</evidence>
<evidence type="ECO:0000255" key="7">
    <source>
        <dbReference type="PROSITE-ProRule" id="PRU00152"/>
    </source>
</evidence>
<evidence type="ECO:0000255" key="8">
    <source>
        <dbReference type="PROSITE-ProRule" id="PRU00260"/>
    </source>
</evidence>
<evidence type="ECO:0000255" key="9">
    <source>
        <dbReference type="PROSITE-ProRule" id="PRU00511"/>
    </source>
</evidence>
<evidence type="ECO:0000256" key="10">
    <source>
        <dbReference type="SAM" id="MobiDB-lite"/>
    </source>
</evidence>
<evidence type="ECO:0000305" key="11"/>
<evidence type="ECO:0000312" key="12">
    <source>
        <dbReference type="MGI" id="MGI:2664668"/>
    </source>
</evidence>
<sequence length="2461" mass="271977">MAGLVFLGLALSSGATVAKSEGGSLCSRSQVFFRDACYEFVPLEHTFPGAQGWCEGHGGHLAFIPDEDTQQFLQRHITQDREWWIGLTGGSGHNGTVGGSGTWLDTSNVNYSNWQEGQATPAPGSCGYIGSGPSSQWAALEDCTQTFAFVCEFGVGRSLACEGHNATMHCDSGEVILVQDAFYGHQTPYLCTRGIWPPSDLEGECGWVSVKDEVAGQCQGLQACQVAVDGTYFGDPCPTRGSYLWVQYQCLEGLRLVVPNGSFIFDNVTISLMWLLSPYTGNLSCVLSMGDGYTFDPYNPPSVSSNVTHQFSSPGEFTVFAECTTSEWHVTAQKQVILCEKVETPRITGCTGLAGAGVGLLCQAVFGEPLWVQVDLDGGAGATYAVLSHNRTLAEFTAQRGSQLYNLTLDRDIQEMLGPGRHHLKIQAVSNEGTGTASAPSGNFTVYFVEPLSGLRASWASDRVELGWDLVVNVSVARGTLEELTFEVAGLNANFSQEEESVGQSSGNYHVAVPAEGTFLVTVHVRNAFSELSLDIGNITVTASSSLQELSGINAEAKSGHKQDMKVFTEPELYVDPFTEVTLGWPDDDPGLNFHWSCGRCWAQWNACVGRQLLHTDQRLLVLHTFCLPPLNSAVTLHLAILRGQELEKETEQCLYVSAPLNLGPQISCEKNCRPVKADQDVLLTVTVGDETSVAVFSWYLDDTVPEEVEPLPAACRLRGFWPRSLTLLHSNSSVLLLNSSFLQTWGPVIPIRVTALTSHAYGEDTYMISMLPRPEVPACTIDPEEGSVLTSFTVSCSTPATLGPVEYCFCLPSGFCLHCGPEPALPAVYLPLGEEKDGFVLPVVISVTNRAGDIEQTQVAVKVGHSYTGVEDVTFQEMVSERIATALHQESGREQLLLFAKAVSSELNSEVQSPGSGQLGMDIKRKVRELMLRSLSVVTTGLQNMQRVQALAEVLREVTQRAEELTPAAQWEASCALQRATEALLVASTKVRPEDQRRQEATRAMFEAVGSVLEASLSHRSEEPMEANSSQVAYIVAQLLRVIDHFQSALLLGTLPGGLPAILVTPSISVYTDRIQPRSWQGSSVHTAAADSVTFTLPAATFLCPMEDSQEPVDIRMMSFSQNPFPSRSQFDVSGTVGGLRLTSSSGHPIPVKNLSQNIEILLPRISAHIEPKMLSLASREALSVNVTAGDTALGIQLHWGPGVPLILSLGYGYHPNETSYDAQTHLPPVAATGDLPTWILHPEDLPFGEGVYYLRVVPEADLESSSGRNLTVGITTFLAHCVFWDETQETWDDSGCQVGPRTTPSQTHCLCNHLTFFGSSFLVMPNAIDVRQTAELFATFEDNPVVVTTVGCLCMLYVLVLIWARRKDIQDQAKVKVVVLEDNDPFAQYHYLVTVYTGHRRGAATSSKVTLTLYGSDGESEPHHLSDPDAAVFERGGVDVFLLSTLFPLGELQSLRLWHDNSGDRPSWYVSRVLVYDSVVDRKWYFLCNSWLSVDVGDCVLDKVFPVATEQDRKQFSHLFFTKTSTGFQDGHIWYSVFCSATRSSFTRVQRVSCCFSMLLCTMLTSIMFWGVPKDPAEQKMDLGKIEFTWQEVMIGLESSILMFPINLLIVQIFRNTRPRLPMGKDGRQKQGPPNLTPSAQPTEEGLLTPETGIQSLISSLFKALKVQPPASGWDSMNPVDINYLLTLMEDIICPESTEGPGFWEEAKGREDPITSTRGSVKPKENTWHPKPELAVRGLWKDSVYRRCLYLQLEHVERELQLLGPQGFLHHHSHAQALRQLHVLKGHLWGQPGTPALAYPSTSRVSKSPRGLPWWCVLVGWLLVATTSGVAAFFTMLYGLHYGRVSSLKWLISMAVSFVESVFITQPLKVLGFAAFFALVLKREDDEETLPLFPGHLSSPGPGVLFRSRRHSSERAYQPPPMAAIEKMKTTRLKEQKAFALIREILAYLAFLWMLLLVAYGQRDPNAYHFHRHLERSFSQGFSPVLGFRGFFEWANTTLVKNLYGHHPGFVTDGNSKLVGSAHIRQVRVRESSCAVAQQLQDSLDGCHGPYSLGIEDLVDYGEGWNASAYNNSNGFPQAWRYQSQSQRRGYPMWGKLTLYGGGGYVVPLGTDHQSASRILQYLFDNSWLDALTRAVFVEFTVYNANVNLFCTVTLTLETSGLGTFFSHVTLQSLRLYPFTDGWHPFVVAAELTYFLFLFYYMVVQGKLMRKQKWGYFCSKWNLLEVAIILASWSALVVFVKRTILADRDLQRYREHREGISFSETAAADAALGYIIAFLVLLSTVKLWHLLRLNPKMNMITSALRRAWGDISGFVAVILIMLLAYSFASNLVFGWKLRSYKTLFDAAETMVSLQLGIFNYEEVLDYSPILGSLLIGSCIVFMTFVVLNLFISVILVAFSEEQKSDQLSEEGEIADLLLVKILSFLGIRCKREETWSSSEQPELPPQALAPQPAQALSRV</sequence>
<keyword id="KW-1015">Disulfide bond</keyword>
<keyword id="KW-0325">Glycoprotein</keyword>
<keyword id="KW-0430">Lectin</keyword>
<keyword id="KW-0472">Membrane</keyword>
<keyword id="KW-1185">Reference proteome</keyword>
<keyword id="KW-0732">Signal</keyword>
<keyword id="KW-0812">Transmembrane</keyword>
<keyword id="KW-1133">Transmembrane helix</keyword>
<proteinExistence type="evidence at transcript level"/>
<name>PK1L2_MOUSE</name>
<protein>
    <recommendedName>
        <fullName evidence="11">Polycystin-1-like protein 2</fullName>
        <shortName evidence="2">Polycystin-1L2</shortName>
    </recommendedName>
    <alternativeName>
        <fullName>PC1-like 2 protein</fullName>
    </alternativeName>
    <alternativeName>
        <fullName>Polycystic kidney disease protein 1-like 2</fullName>
    </alternativeName>
</protein>
<reference key="1">
    <citation type="journal article" date="2003" name="Genomics">
        <title>Identification of two novel polycystic kidney disease-1-like genes in human and mouse genomes.</title>
        <authorList>
            <person name="Li A."/>
            <person name="Tian X."/>
            <person name="Sung S.-W."/>
            <person name="Somlo S."/>
        </authorList>
    </citation>
    <scope>NUCLEOTIDE SEQUENCE [MRNA]</scope>
    <source>
        <strain>C57BL/6J</strain>
        <tissue>Embryo</tissue>
    </source>
</reference>
<reference key="2">
    <citation type="journal article" date="2003" name="Genomics">
        <authorList>
            <person name="Li A."/>
            <person name="Tian X."/>
            <person name="Sung S.-W."/>
            <person name="Somlo S."/>
        </authorList>
    </citation>
    <scope>ERRATUM OF PUBMED:12782129</scope>
</reference>
<gene>
    <name evidence="12" type="primary">Pkd1l2</name>
</gene>